<gene>
    <name type="primary">cfap96</name>
    <name type="ORF">zgc:153146</name>
</gene>
<organism>
    <name type="scientific">Danio rerio</name>
    <name type="common">Zebrafish</name>
    <name type="synonym">Brachydanio rerio</name>
    <dbReference type="NCBI Taxonomy" id="7955"/>
    <lineage>
        <taxon>Eukaryota</taxon>
        <taxon>Metazoa</taxon>
        <taxon>Chordata</taxon>
        <taxon>Craniata</taxon>
        <taxon>Vertebrata</taxon>
        <taxon>Euteleostomi</taxon>
        <taxon>Actinopterygii</taxon>
        <taxon>Neopterygii</taxon>
        <taxon>Teleostei</taxon>
        <taxon>Ostariophysi</taxon>
        <taxon>Cypriniformes</taxon>
        <taxon>Danionidae</taxon>
        <taxon>Danioninae</taxon>
        <taxon>Danio</taxon>
    </lineage>
</organism>
<accession>Q0P4C5</accession>
<name>CFA96_DANRE</name>
<sequence length="311" mass="34730">MPPDGKSDMERIGVFKEMGYISIGDKYTSFIYRPFNDSAYKNKQMLLGGTKSKCGLQTGYFDTQFKRIFEREAFTDPVRIDRQYRILQAKKNIGKAFLPSNGEKTTCGMGTYYGTFGGPIQAMSALQIPRKQNKSAGKNFYTNPPKEGSGYGCPDITLSKMVSYSSDPYDRAKEMLKREITAHKSMLKGGAFRLNLHPNEYFDGNPYKFDKPLPPPKKIEEKKHFAVPFKPSSPSKKAGGMKAGAFDSYPTYSAEPYGTKKTKSVVANNEVKIFHPSPGPKSTPIKSIISLNVNKAVNSTNYNRIPSVMSF</sequence>
<protein>
    <recommendedName>
        <fullName>Cilia-and flagella-associated protein 96</fullName>
    </recommendedName>
</protein>
<dbReference type="EMBL" id="BC122158">
    <property type="protein sequence ID" value="AAI22159.1"/>
    <property type="molecule type" value="mRNA"/>
</dbReference>
<dbReference type="RefSeq" id="NP_001038879.1">
    <property type="nucleotide sequence ID" value="NM_001045414.1"/>
</dbReference>
<dbReference type="SMR" id="Q0P4C5"/>
<dbReference type="FunCoup" id="Q0P4C5">
    <property type="interactions" value="68"/>
</dbReference>
<dbReference type="STRING" id="7955.ENSDARP00000054005"/>
<dbReference type="PaxDb" id="7955-ENSDARP00000054005"/>
<dbReference type="GeneID" id="751702"/>
<dbReference type="KEGG" id="dre:751702"/>
<dbReference type="AGR" id="ZFIN:ZDB-GENE-060825-339"/>
<dbReference type="CTD" id="441054"/>
<dbReference type="ZFIN" id="ZDB-GENE-060825-339">
    <property type="gene designation" value="cfap96"/>
</dbReference>
<dbReference type="eggNOG" id="ENOG502QVET">
    <property type="taxonomic scope" value="Eukaryota"/>
</dbReference>
<dbReference type="InParanoid" id="Q0P4C5"/>
<dbReference type="OrthoDB" id="283553at2759"/>
<dbReference type="PhylomeDB" id="Q0P4C5"/>
<dbReference type="PRO" id="PR:Q0P4C5"/>
<dbReference type="Proteomes" id="UP000000437">
    <property type="component" value="Alternate scaffold 14"/>
</dbReference>
<dbReference type="Proteomes" id="UP000000437">
    <property type="component" value="Chromosome 14"/>
</dbReference>
<dbReference type="GO" id="GO:0005813">
    <property type="term" value="C:centrosome"/>
    <property type="evidence" value="ECO:0000250"/>
    <property type="project" value="UniProtKB"/>
</dbReference>
<dbReference type="GO" id="GO:0005881">
    <property type="term" value="C:cytoplasmic microtubule"/>
    <property type="evidence" value="ECO:0000318"/>
    <property type="project" value="GO_Central"/>
</dbReference>
<dbReference type="InterPro" id="IPR029358">
    <property type="entry name" value="CFAP96"/>
</dbReference>
<dbReference type="PANTHER" id="PTHR31144">
    <property type="entry name" value="UPF0602 PROTEIN C4ORF47"/>
    <property type="match status" value="1"/>
</dbReference>
<dbReference type="PANTHER" id="PTHR31144:SF1">
    <property type="entry name" value="UPF0602 PROTEIN C4ORF47"/>
    <property type="match status" value="1"/>
</dbReference>
<dbReference type="Pfam" id="PF15239">
    <property type="entry name" value="CFAP96-like"/>
    <property type="match status" value="1"/>
</dbReference>
<feature type="chain" id="PRO_0000341952" description="Cilia-and flagella-associated protein 96">
    <location>
        <begin position="1"/>
        <end position="311"/>
    </location>
</feature>
<comment type="subcellular location">
    <subcellularLocation>
        <location evidence="1">Cytoplasm</location>
        <location evidence="1">Cytoskeleton</location>
        <location evidence="1">Microtubule organizing center</location>
        <location evidence="1">Centrosome</location>
    </subcellularLocation>
</comment>
<comment type="similarity">
    <text evidence="2">Belongs to the CFAP96 family.</text>
</comment>
<proteinExistence type="evidence at transcript level"/>
<reference key="1">
    <citation type="submission" date="2006-08" db="EMBL/GenBank/DDBJ databases">
        <authorList>
            <consortium name="NIH - Zebrafish Gene Collection (ZGC) project"/>
        </authorList>
    </citation>
    <scope>NUCLEOTIDE SEQUENCE [LARGE SCALE MRNA]</scope>
    <source>
        <tissue>Olfactory epithelium</tissue>
    </source>
</reference>
<evidence type="ECO:0000250" key="1">
    <source>
        <dbReference type="UniProtKB" id="A7E2U8"/>
    </source>
</evidence>
<evidence type="ECO:0000305" key="2"/>
<keyword id="KW-0963">Cytoplasm</keyword>
<keyword id="KW-0206">Cytoskeleton</keyword>
<keyword id="KW-1185">Reference proteome</keyword>